<name>GATB_BIFLD</name>
<comment type="function">
    <text evidence="1">Allows the formation of correctly charged Asn-tRNA(Asn) or Gln-tRNA(Gln) through the transamidation of misacylated Asp-tRNA(Asn) or Glu-tRNA(Gln) in organisms which lack either or both of asparaginyl-tRNA or glutaminyl-tRNA synthetases. The reaction takes place in the presence of glutamine and ATP through an activated phospho-Asp-tRNA(Asn) or phospho-Glu-tRNA(Gln).</text>
</comment>
<comment type="catalytic activity">
    <reaction evidence="1">
        <text>L-glutamyl-tRNA(Gln) + L-glutamine + ATP + H2O = L-glutaminyl-tRNA(Gln) + L-glutamate + ADP + phosphate + H(+)</text>
        <dbReference type="Rhea" id="RHEA:17521"/>
        <dbReference type="Rhea" id="RHEA-COMP:9681"/>
        <dbReference type="Rhea" id="RHEA-COMP:9684"/>
        <dbReference type="ChEBI" id="CHEBI:15377"/>
        <dbReference type="ChEBI" id="CHEBI:15378"/>
        <dbReference type="ChEBI" id="CHEBI:29985"/>
        <dbReference type="ChEBI" id="CHEBI:30616"/>
        <dbReference type="ChEBI" id="CHEBI:43474"/>
        <dbReference type="ChEBI" id="CHEBI:58359"/>
        <dbReference type="ChEBI" id="CHEBI:78520"/>
        <dbReference type="ChEBI" id="CHEBI:78521"/>
        <dbReference type="ChEBI" id="CHEBI:456216"/>
    </reaction>
</comment>
<comment type="catalytic activity">
    <reaction evidence="1">
        <text>L-aspartyl-tRNA(Asn) + L-glutamine + ATP + H2O = L-asparaginyl-tRNA(Asn) + L-glutamate + ADP + phosphate + 2 H(+)</text>
        <dbReference type="Rhea" id="RHEA:14513"/>
        <dbReference type="Rhea" id="RHEA-COMP:9674"/>
        <dbReference type="Rhea" id="RHEA-COMP:9677"/>
        <dbReference type="ChEBI" id="CHEBI:15377"/>
        <dbReference type="ChEBI" id="CHEBI:15378"/>
        <dbReference type="ChEBI" id="CHEBI:29985"/>
        <dbReference type="ChEBI" id="CHEBI:30616"/>
        <dbReference type="ChEBI" id="CHEBI:43474"/>
        <dbReference type="ChEBI" id="CHEBI:58359"/>
        <dbReference type="ChEBI" id="CHEBI:78515"/>
        <dbReference type="ChEBI" id="CHEBI:78516"/>
        <dbReference type="ChEBI" id="CHEBI:456216"/>
    </reaction>
</comment>
<comment type="subunit">
    <text evidence="1">Heterotrimer of A, B and C subunits.</text>
</comment>
<comment type="similarity">
    <text evidence="1">Belongs to the GatB/GatE family. GatB subfamily.</text>
</comment>
<accession>B3DU31</accession>
<protein>
    <recommendedName>
        <fullName evidence="1">Aspartyl/glutamyl-tRNA(Asn/Gln) amidotransferase subunit B</fullName>
        <shortName evidence="1">Asp/Glu-ADT subunit B</shortName>
        <ecNumber evidence="1">6.3.5.-</ecNumber>
    </recommendedName>
</protein>
<keyword id="KW-0067">ATP-binding</keyword>
<keyword id="KW-0436">Ligase</keyword>
<keyword id="KW-0547">Nucleotide-binding</keyword>
<keyword id="KW-0648">Protein biosynthesis</keyword>
<gene>
    <name evidence="1" type="primary">gatB</name>
    <name type="ordered locus">BLD_1205</name>
</gene>
<feature type="chain" id="PRO_1000095184" description="Aspartyl/glutamyl-tRNA(Asn/Gln) amidotransferase subunit B">
    <location>
        <begin position="1"/>
        <end position="499"/>
    </location>
</feature>
<organism>
    <name type="scientific">Bifidobacterium longum (strain DJO10A)</name>
    <dbReference type="NCBI Taxonomy" id="205913"/>
    <lineage>
        <taxon>Bacteria</taxon>
        <taxon>Bacillati</taxon>
        <taxon>Actinomycetota</taxon>
        <taxon>Actinomycetes</taxon>
        <taxon>Bifidobacteriales</taxon>
        <taxon>Bifidobacteriaceae</taxon>
        <taxon>Bifidobacterium</taxon>
    </lineage>
</organism>
<proteinExistence type="inferred from homology"/>
<evidence type="ECO:0000255" key="1">
    <source>
        <dbReference type="HAMAP-Rule" id="MF_00121"/>
    </source>
</evidence>
<dbReference type="EC" id="6.3.5.-" evidence="1"/>
<dbReference type="EMBL" id="CP000605">
    <property type="protein sequence ID" value="ACD98650.1"/>
    <property type="molecule type" value="Genomic_DNA"/>
</dbReference>
<dbReference type="RefSeq" id="WP_007051530.1">
    <property type="nucleotide sequence ID" value="NZ_AABM02000005.1"/>
</dbReference>
<dbReference type="SMR" id="B3DU31"/>
<dbReference type="GeneID" id="69577474"/>
<dbReference type="KEGG" id="blj:BLD_1205"/>
<dbReference type="HOGENOM" id="CLU_019240_0_0_11"/>
<dbReference type="Proteomes" id="UP000002419">
    <property type="component" value="Chromosome"/>
</dbReference>
<dbReference type="GO" id="GO:0050566">
    <property type="term" value="F:asparaginyl-tRNA synthase (glutamine-hydrolyzing) activity"/>
    <property type="evidence" value="ECO:0007669"/>
    <property type="project" value="RHEA"/>
</dbReference>
<dbReference type="GO" id="GO:0005524">
    <property type="term" value="F:ATP binding"/>
    <property type="evidence" value="ECO:0007669"/>
    <property type="project" value="UniProtKB-KW"/>
</dbReference>
<dbReference type="GO" id="GO:0050567">
    <property type="term" value="F:glutaminyl-tRNA synthase (glutamine-hydrolyzing) activity"/>
    <property type="evidence" value="ECO:0007669"/>
    <property type="project" value="UniProtKB-UniRule"/>
</dbReference>
<dbReference type="GO" id="GO:0070681">
    <property type="term" value="P:glutaminyl-tRNAGln biosynthesis via transamidation"/>
    <property type="evidence" value="ECO:0007669"/>
    <property type="project" value="TreeGrafter"/>
</dbReference>
<dbReference type="GO" id="GO:0006412">
    <property type="term" value="P:translation"/>
    <property type="evidence" value="ECO:0007669"/>
    <property type="project" value="UniProtKB-UniRule"/>
</dbReference>
<dbReference type="Gene3D" id="1.10.10.410">
    <property type="match status" value="1"/>
</dbReference>
<dbReference type="Gene3D" id="1.10.150.380">
    <property type="entry name" value="GatB domain, N-terminal subdomain"/>
    <property type="match status" value="1"/>
</dbReference>
<dbReference type="HAMAP" id="MF_00121">
    <property type="entry name" value="GatB"/>
    <property type="match status" value="1"/>
</dbReference>
<dbReference type="InterPro" id="IPR017959">
    <property type="entry name" value="Asn/Gln-tRNA_amidoTrfase_suB/E"/>
</dbReference>
<dbReference type="InterPro" id="IPR006075">
    <property type="entry name" value="Asn/Gln-tRNA_Trfase_suB/E_cat"/>
</dbReference>
<dbReference type="InterPro" id="IPR018027">
    <property type="entry name" value="Asn/Gln_amidotransferase"/>
</dbReference>
<dbReference type="InterPro" id="IPR003789">
    <property type="entry name" value="Asn/Gln_tRNA_amidoTrase-B-like"/>
</dbReference>
<dbReference type="InterPro" id="IPR004413">
    <property type="entry name" value="GatB"/>
</dbReference>
<dbReference type="InterPro" id="IPR042114">
    <property type="entry name" value="GatB_C_1"/>
</dbReference>
<dbReference type="InterPro" id="IPR023168">
    <property type="entry name" value="GatB_Yqey_C_2"/>
</dbReference>
<dbReference type="InterPro" id="IPR017958">
    <property type="entry name" value="Gln-tRNA_amidoTrfase_suB_CS"/>
</dbReference>
<dbReference type="InterPro" id="IPR014746">
    <property type="entry name" value="Gln_synth/guanido_kin_cat_dom"/>
</dbReference>
<dbReference type="NCBIfam" id="TIGR00133">
    <property type="entry name" value="gatB"/>
    <property type="match status" value="1"/>
</dbReference>
<dbReference type="NCBIfam" id="NF004012">
    <property type="entry name" value="PRK05477.1-2"/>
    <property type="match status" value="1"/>
</dbReference>
<dbReference type="NCBIfam" id="NF004013">
    <property type="entry name" value="PRK05477.1-3"/>
    <property type="match status" value="1"/>
</dbReference>
<dbReference type="NCBIfam" id="NF004014">
    <property type="entry name" value="PRK05477.1-4"/>
    <property type="match status" value="1"/>
</dbReference>
<dbReference type="PANTHER" id="PTHR11659">
    <property type="entry name" value="GLUTAMYL-TRNA GLN AMIDOTRANSFERASE SUBUNIT B MITOCHONDRIAL AND PROKARYOTIC PET112-RELATED"/>
    <property type="match status" value="1"/>
</dbReference>
<dbReference type="PANTHER" id="PTHR11659:SF0">
    <property type="entry name" value="GLUTAMYL-TRNA(GLN) AMIDOTRANSFERASE SUBUNIT B, MITOCHONDRIAL"/>
    <property type="match status" value="1"/>
</dbReference>
<dbReference type="Pfam" id="PF02934">
    <property type="entry name" value="GatB_N"/>
    <property type="match status" value="1"/>
</dbReference>
<dbReference type="Pfam" id="PF02637">
    <property type="entry name" value="GatB_Yqey"/>
    <property type="match status" value="1"/>
</dbReference>
<dbReference type="SMART" id="SM00845">
    <property type="entry name" value="GatB_Yqey"/>
    <property type="match status" value="1"/>
</dbReference>
<dbReference type="SUPFAM" id="SSF89095">
    <property type="entry name" value="GatB/YqeY motif"/>
    <property type="match status" value="1"/>
</dbReference>
<dbReference type="SUPFAM" id="SSF55931">
    <property type="entry name" value="Glutamine synthetase/guanido kinase"/>
    <property type="match status" value="1"/>
</dbReference>
<dbReference type="PROSITE" id="PS01234">
    <property type="entry name" value="GATB"/>
    <property type="match status" value="1"/>
</dbReference>
<reference key="1">
    <citation type="journal article" date="2008" name="BMC Genomics">
        <title>Comparative genomic analysis of the gut bacterium Bifidobacterium longum reveals loci susceptible to deletion during pure culture growth.</title>
        <authorList>
            <person name="Lee J.H."/>
            <person name="Karamychev V.N."/>
            <person name="Kozyavkin S.A."/>
            <person name="Mills D."/>
            <person name="Pavlov A.R."/>
            <person name="Pavlova N.V."/>
            <person name="Polouchine N.N."/>
            <person name="Richardson P.M."/>
            <person name="Shakhova V.V."/>
            <person name="Slesarev A.I."/>
            <person name="Weimer B."/>
            <person name="O'Sullivan D.J."/>
        </authorList>
    </citation>
    <scope>NUCLEOTIDE SEQUENCE [LARGE SCALE GENOMIC DNA]</scope>
    <source>
        <strain>DJO10A</strain>
    </source>
</reference>
<sequence length="499" mass="55057">MAEKLMKYADATKKYDVVFGLETHVELSTNTKLFCPAHIEFGGEPNTELTPVSLGLPGSLPVINKTAVDYAIKLGLALHCEIAEWSQFARKNYFYPDMPRDYQISQYDKPTNGNGYLDVELEDGTVFRVPIERAHIEDDAGKNTHVGGADGRIEGADHSLVDYNRAGVPLIEIVTKPIEGAGDRAPEIAGAYVRAIRDIVRALNISHARMEQGNMRADVNVSLRPSPDAPYGTRSETKNVNSFRGIEKTIQYEIRRQAARLDDGKEILQETRHWDEATQTTAGGRLKSDADDYRYFPDPDLVMLHITKEHIEEMKAQMPEMPRERRNRLKSEWGLSDLQMRDILNADALDLIEETVKAGAKAAGARKWWLGELSREANAKGVSLEELPITPADVAEVEKLIASGKLNDKLAKQTVEGVLKGEGTPDEVVKKHDYKIVEDNGAIEAAVDAAFEANPDVVEKLKSGNMKPMGVIIGAVMKATRGQADAKAVTKVVMGKIKG</sequence>